<proteinExistence type="evidence at protein level"/>
<sequence length="237" mass="27512">MTSEITYAEVRFKNEFKSSGINTASSAASKERTAPHKSNTGFPKLLCASLLIFFLLLAISFFIAFVIFFQKYSQLLEKKTTKELVHTTLECVKKNMPVEETAWSCCPKNWKSFSSNCYFISTESASWQDSEKDCARMEAHLLVINTQEEQDFIFQNLQEESAYFVGLSDPEGQRHWQWVDQTPYNESSTFWHPREPSDPNERCVVLNFRKSPKRWGWNDVNCLGPQRSVCEMMKIHL</sequence>
<dbReference type="EMBL" id="AJ133532">
    <property type="protein sequence ID" value="CAB54001.1"/>
    <property type="molecule type" value="mRNA"/>
</dbReference>
<dbReference type="EMBL" id="AF067800">
    <property type="protein sequence ID" value="AAF75560.1"/>
    <property type="molecule type" value="mRNA"/>
</dbReference>
<dbReference type="EMBL" id="AF328684">
    <property type="protein sequence ID" value="AAL56016.1"/>
    <property type="status" value="ALT_FRAME"/>
    <property type="molecule type" value="mRNA"/>
</dbReference>
<dbReference type="EMBL" id="AF109146">
    <property type="protein sequence ID" value="AAF14348.1"/>
    <property type="molecule type" value="mRNA"/>
</dbReference>
<dbReference type="EMBL" id="AF200738">
    <property type="protein sequence ID" value="AAG35593.1"/>
    <property type="molecule type" value="mRNA"/>
</dbReference>
<dbReference type="EMBL" id="AC006511">
    <property type="status" value="NOT_ANNOTATED_CDS"/>
    <property type="molecule type" value="Genomic_DNA"/>
</dbReference>
<dbReference type="EMBL" id="AC092111">
    <property type="status" value="NOT_ANNOTATED_CDS"/>
    <property type="molecule type" value="Genomic_DNA"/>
</dbReference>
<dbReference type="EMBL" id="BC074822">
    <property type="protein sequence ID" value="AAH74822.1"/>
    <property type="molecule type" value="mRNA"/>
</dbReference>
<dbReference type="EMBL" id="BC074874">
    <property type="protein sequence ID" value="AAH74874.1"/>
    <property type="molecule type" value="mRNA"/>
</dbReference>
<dbReference type="EMBL" id="BC117439">
    <property type="protein sequence ID" value="AAI17440.1"/>
    <property type="molecule type" value="mRNA"/>
</dbReference>
<dbReference type="EMBL" id="BC117441">
    <property type="protein sequence ID" value="AAI17442.1"/>
    <property type="molecule type" value="mRNA"/>
</dbReference>
<dbReference type="CCDS" id="CCDS41745.1">
    <molecule id="Q9UMR7-3"/>
</dbReference>
<dbReference type="CCDS" id="CCDS8590.1">
    <molecule id="Q9UMR7-1"/>
</dbReference>
<dbReference type="CCDS" id="CCDS8591.1">
    <molecule id="Q9UMR7-4"/>
</dbReference>
<dbReference type="CCDS" id="CCDS8592.1">
    <molecule id="Q9UMR7-2"/>
</dbReference>
<dbReference type="PIR" id="JC7608">
    <property type="entry name" value="JC7608"/>
</dbReference>
<dbReference type="RefSeq" id="NP_057268.1">
    <molecule id="Q9UMR7-1"/>
    <property type="nucleotide sequence ID" value="NM_016184.4"/>
</dbReference>
<dbReference type="RefSeq" id="NP_919429.2">
    <molecule id="Q9UMR7-3"/>
    <property type="nucleotide sequence ID" value="NM_194447.3"/>
</dbReference>
<dbReference type="RefSeq" id="NP_919430.1">
    <molecule id="Q9UMR7-4"/>
    <property type="nucleotide sequence ID" value="NM_194448.3"/>
</dbReference>
<dbReference type="RefSeq" id="NP_919432.1">
    <molecule id="Q9UMR7-2"/>
    <property type="nucleotide sequence ID" value="NM_194450.3"/>
</dbReference>
<dbReference type="PDB" id="5B1W">
    <property type="method" value="X-ray"/>
    <property type="resolution" value="3.05 A"/>
    <property type="chains" value="A/B/C/D=106-237"/>
</dbReference>
<dbReference type="PDB" id="5B1X">
    <property type="method" value="X-ray"/>
    <property type="resolution" value="2.90 A"/>
    <property type="chains" value="A/B/C/D=106-237"/>
</dbReference>
<dbReference type="PDBsum" id="5B1W"/>
<dbReference type="PDBsum" id="5B1X"/>
<dbReference type="SMR" id="Q9UMR7"/>
<dbReference type="BioGRID" id="119158">
    <property type="interactions" value="114"/>
</dbReference>
<dbReference type="FunCoup" id="Q9UMR7">
    <property type="interactions" value="262"/>
</dbReference>
<dbReference type="IntAct" id="Q9UMR7">
    <property type="interactions" value="99"/>
</dbReference>
<dbReference type="STRING" id="9606.ENSP00000229332"/>
<dbReference type="UniLectin" id="Q9UMR7"/>
<dbReference type="GlyCosmos" id="Q9UMR7">
    <property type="glycosylation" value="1 site, No reported glycans"/>
</dbReference>
<dbReference type="GlyGen" id="Q9UMR7">
    <property type="glycosylation" value="2 sites"/>
</dbReference>
<dbReference type="iPTMnet" id="Q9UMR7"/>
<dbReference type="PhosphoSitePlus" id="Q9UMR7"/>
<dbReference type="BioMuta" id="CLEC4A"/>
<dbReference type="DMDM" id="59797977"/>
<dbReference type="MassIVE" id="Q9UMR7"/>
<dbReference type="PaxDb" id="9606-ENSP00000229332"/>
<dbReference type="PeptideAtlas" id="Q9UMR7"/>
<dbReference type="ProteomicsDB" id="85200">
    <molecule id="Q9UMR7-1"/>
</dbReference>
<dbReference type="ProteomicsDB" id="85201">
    <molecule id="Q9UMR7-2"/>
</dbReference>
<dbReference type="ProteomicsDB" id="85202">
    <molecule id="Q9UMR7-3"/>
</dbReference>
<dbReference type="ProteomicsDB" id="85203">
    <molecule id="Q9UMR7-4"/>
</dbReference>
<dbReference type="ABCD" id="Q9UMR7">
    <property type="antibodies" value="1 sequenced antibody"/>
</dbReference>
<dbReference type="Antibodypedia" id="1471">
    <property type="antibodies" value="332 antibodies from 25 providers"/>
</dbReference>
<dbReference type="DNASU" id="50856"/>
<dbReference type="Ensembl" id="ENST00000229332.12">
    <molecule id="Q9UMR7-1"/>
    <property type="protein sequence ID" value="ENSP00000229332.5"/>
    <property type="gene ID" value="ENSG00000111729.15"/>
</dbReference>
<dbReference type="Ensembl" id="ENST00000345999.9">
    <molecule id="Q9UMR7-4"/>
    <property type="protein sequence ID" value="ENSP00000344646.3"/>
    <property type="gene ID" value="ENSG00000111729.15"/>
</dbReference>
<dbReference type="Ensembl" id="ENST00000352620.9">
    <molecule id="Q9UMR7-2"/>
    <property type="protein sequence ID" value="ENSP00000247243.5"/>
    <property type="gene ID" value="ENSG00000111729.15"/>
</dbReference>
<dbReference type="Ensembl" id="ENST00000360500.5">
    <molecule id="Q9UMR7-3"/>
    <property type="protein sequence ID" value="ENSP00000353690.3"/>
    <property type="gene ID" value="ENSG00000111729.15"/>
</dbReference>
<dbReference type="GeneID" id="50856"/>
<dbReference type="KEGG" id="hsa:50856"/>
<dbReference type="MANE-Select" id="ENST00000229332.12">
    <property type="protein sequence ID" value="ENSP00000229332.5"/>
    <property type="RefSeq nucleotide sequence ID" value="NM_016184.4"/>
    <property type="RefSeq protein sequence ID" value="NP_057268.1"/>
</dbReference>
<dbReference type="UCSC" id="uc001qtz.1">
    <molecule id="Q9UMR7-1"/>
    <property type="organism name" value="human"/>
</dbReference>
<dbReference type="AGR" id="HGNC:13257"/>
<dbReference type="CTD" id="50856"/>
<dbReference type="DisGeNET" id="50856"/>
<dbReference type="GeneCards" id="CLEC4A"/>
<dbReference type="HGNC" id="HGNC:13257">
    <property type="gene designation" value="CLEC4A"/>
</dbReference>
<dbReference type="HPA" id="ENSG00000111729">
    <property type="expression patterns" value="Tissue enhanced (bone marrow, lymphoid tissue)"/>
</dbReference>
<dbReference type="MIM" id="605306">
    <property type="type" value="gene"/>
</dbReference>
<dbReference type="neXtProt" id="NX_Q9UMR7"/>
<dbReference type="OpenTargets" id="ENSG00000111729"/>
<dbReference type="PharmGKB" id="PA26584"/>
<dbReference type="VEuPathDB" id="HostDB:ENSG00000111729"/>
<dbReference type="eggNOG" id="KOG4297">
    <property type="taxonomic scope" value="Eukaryota"/>
</dbReference>
<dbReference type="GeneTree" id="ENSGT00940000158835"/>
<dbReference type="HOGENOM" id="CLU_049894_10_2_1"/>
<dbReference type="InParanoid" id="Q9UMR7"/>
<dbReference type="OMA" id="HTALECM"/>
<dbReference type="OrthoDB" id="2142683at2759"/>
<dbReference type="PAN-GO" id="Q9UMR7">
    <property type="GO annotations" value="3 GO annotations based on evolutionary models"/>
</dbReference>
<dbReference type="PhylomeDB" id="Q9UMR7"/>
<dbReference type="TreeFam" id="TF333341"/>
<dbReference type="PathwayCommons" id="Q9UMR7"/>
<dbReference type="Reactome" id="R-HSA-5621480">
    <property type="pathway name" value="Dectin-2 family"/>
</dbReference>
<dbReference type="SignaLink" id="Q9UMR7"/>
<dbReference type="BioGRID-ORCS" id="50856">
    <property type="hits" value="9 hits in 1142 CRISPR screens"/>
</dbReference>
<dbReference type="ChiTaRS" id="CLEC4A">
    <property type="organism name" value="human"/>
</dbReference>
<dbReference type="EvolutionaryTrace" id="Q9UMR7"/>
<dbReference type="GeneWiki" id="CLEC4A"/>
<dbReference type="GenomeRNAi" id="50856"/>
<dbReference type="Pharos" id="Q9UMR7">
    <property type="development level" value="Tbio"/>
</dbReference>
<dbReference type="PRO" id="PR:Q9UMR7"/>
<dbReference type="Proteomes" id="UP000005640">
    <property type="component" value="Chromosome 12"/>
</dbReference>
<dbReference type="RNAct" id="Q9UMR7">
    <property type="molecule type" value="protein"/>
</dbReference>
<dbReference type="Bgee" id="ENSG00000111729">
    <property type="expression patterns" value="Expressed in monocyte and 99 other cell types or tissues"/>
</dbReference>
<dbReference type="ExpressionAtlas" id="Q9UMR7">
    <property type="expression patterns" value="baseline and differential"/>
</dbReference>
<dbReference type="GO" id="GO:0009897">
    <property type="term" value="C:external side of plasma membrane"/>
    <property type="evidence" value="ECO:0000318"/>
    <property type="project" value="GO_Central"/>
</dbReference>
<dbReference type="GO" id="GO:0005886">
    <property type="term" value="C:plasma membrane"/>
    <property type="evidence" value="ECO:0000304"/>
    <property type="project" value="Reactome"/>
</dbReference>
<dbReference type="GO" id="GO:0005509">
    <property type="term" value="F:calcium ion binding"/>
    <property type="evidence" value="ECO:0000314"/>
    <property type="project" value="UniProtKB"/>
</dbReference>
<dbReference type="GO" id="GO:0030246">
    <property type="term" value="F:carbohydrate binding"/>
    <property type="evidence" value="ECO:0000314"/>
    <property type="project" value="UniProtKB"/>
</dbReference>
<dbReference type="GO" id="GO:0005537">
    <property type="term" value="F:D-mannose binding"/>
    <property type="evidence" value="ECO:0000314"/>
    <property type="project" value="UniProtKB"/>
</dbReference>
<dbReference type="GO" id="GO:0038187">
    <property type="term" value="F:pattern recognition receptor activity"/>
    <property type="evidence" value="ECO:0000318"/>
    <property type="project" value="GO_Central"/>
</dbReference>
<dbReference type="GO" id="GO:0004888">
    <property type="term" value="F:transmembrane signaling receptor activity"/>
    <property type="evidence" value="ECO:0000304"/>
    <property type="project" value="ProtInc"/>
</dbReference>
<dbReference type="GO" id="GO:0002250">
    <property type="term" value="P:adaptive immune response"/>
    <property type="evidence" value="ECO:0007669"/>
    <property type="project" value="UniProtKB-KW"/>
</dbReference>
<dbReference type="GO" id="GO:0061760">
    <property type="term" value="P:antifungal innate immune response"/>
    <property type="evidence" value="ECO:0000318"/>
    <property type="project" value="GO_Central"/>
</dbReference>
<dbReference type="GO" id="GO:0042590">
    <property type="term" value="P:antigen processing and presentation of exogenous peptide antigen via MHC class I"/>
    <property type="evidence" value="ECO:0000314"/>
    <property type="project" value="UniProtKB"/>
</dbReference>
<dbReference type="GO" id="GO:0036037">
    <property type="term" value="P:CD8-positive, alpha-beta T cell activation"/>
    <property type="evidence" value="ECO:0000314"/>
    <property type="project" value="UniProtKB"/>
</dbReference>
<dbReference type="GO" id="GO:0007155">
    <property type="term" value="P:cell adhesion"/>
    <property type="evidence" value="ECO:0000304"/>
    <property type="project" value="ProtInc"/>
</dbReference>
<dbReference type="GO" id="GO:0007166">
    <property type="term" value="P:cell surface receptor signaling pathway"/>
    <property type="evidence" value="ECO:0000304"/>
    <property type="project" value="ProtInc"/>
</dbReference>
<dbReference type="GO" id="GO:0001818">
    <property type="term" value="P:negative regulation of cytokine production"/>
    <property type="evidence" value="ECO:0000314"/>
    <property type="project" value="UniProtKB"/>
</dbReference>
<dbReference type="GO" id="GO:0032720">
    <property type="term" value="P:negative regulation of tumor necrosis factor production"/>
    <property type="evidence" value="ECO:0000314"/>
    <property type="project" value="UniProtKB"/>
</dbReference>
<dbReference type="GO" id="GO:0002470">
    <property type="term" value="P:plasmacytoid dendritic cell antigen processing and presentation"/>
    <property type="evidence" value="ECO:0000314"/>
    <property type="project" value="UniProtKB"/>
</dbReference>
<dbReference type="CDD" id="cd03590">
    <property type="entry name" value="CLECT_DC-SIGN_like"/>
    <property type="match status" value="1"/>
</dbReference>
<dbReference type="FunFam" id="3.10.100.10:FF:000024">
    <property type="entry name" value="C-type lectin domain family 4 member A"/>
    <property type="match status" value="1"/>
</dbReference>
<dbReference type="Gene3D" id="3.10.100.10">
    <property type="entry name" value="Mannose-Binding Protein A, subunit A"/>
    <property type="match status" value="1"/>
</dbReference>
<dbReference type="InterPro" id="IPR001304">
    <property type="entry name" value="C-type_lectin-like"/>
</dbReference>
<dbReference type="InterPro" id="IPR016186">
    <property type="entry name" value="C-type_lectin-like/link_sf"/>
</dbReference>
<dbReference type="InterPro" id="IPR018378">
    <property type="entry name" value="C-type_lectin_CS"/>
</dbReference>
<dbReference type="InterPro" id="IPR051379">
    <property type="entry name" value="C-type_Lectin_Receptor_IMM"/>
</dbReference>
<dbReference type="InterPro" id="IPR033989">
    <property type="entry name" value="CD209-like_CTLD"/>
</dbReference>
<dbReference type="InterPro" id="IPR016187">
    <property type="entry name" value="CTDL_fold"/>
</dbReference>
<dbReference type="PANTHER" id="PTHR46746:SF9">
    <property type="entry name" value="CD209 ANTIGEN-LIKE PROTEIN C-LIKE"/>
    <property type="match status" value="1"/>
</dbReference>
<dbReference type="PANTHER" id="PTHR46746">
    <property type="entry name" value="KILLER CELL LECTIN-LIKE RECEPTOR SUBFAMILY F MEMBER 2"/>
    <property type="match status" value="1"/>
</dbReference>
<dbReference type="Pfam" id="PF00059">
    <property type="entry name" value="Lectin_C"/>
    <property type="match status" value="1"/>
</dbReference>
<dbReference type="SMART" id="SM00034">
    <property type="entry name" value="CLECT"/>
    <property type="match status" value="1"/>
</dbReference>
<dbReference type="SUPFAM" id="SSF56436">
    <property type="entry name" value="C-type lectin-like"/>
    <property type="match status" value="1"/>
</dbReference>
<dbReference type="PROSITE" id="PS00615">
    <property type="entry name" value="C_TYPE_LECTIN_1"/>
    <property type="match status" value="1"/>
</dbReference>
<dbReference type="PROSITE" id="PS50041">
    <property type="entry name" value="C_TYPE_LECTIN_2"/>
    <property type="match status" value="1"/>
</dbReference>
<protein>
    <recommendedName>
        <fullName evidence="14">C-type lectin domain family 4 member A</fullName>
    </recommendedName>
    <alternativeName>
        <fullName>C-type lectin DDB27</fullName>
    </alternativeName>
    <alternativeName>
        <fullName>C-type lectin superfamily member 6</fullName>
    </alternativeName>
    <alternativeName>
        <fullName>Dendritic cell immunoreceptor</fullName>
    </alternativeName>
    <alternativeName>
        <fullName>Lectin-like immunoreceptor</fullName>
    </alternativeName>
    <cdAntigenName>CD367</cdAntigenName>
</protein>
<reference key="1">
    <citation type="journal article" date="1999" name="J. Immunol.">
        <title>APCs express DCIR, a novel C-type lectin surface receptor containing an immunoreceptor tyrosine-based inhibitory motif.</title>
        <authorList>
            <person name="Bates E.E.M."/>
            <person name="Fournier N."/>
            <person name="Garcia E."/>
            <person name="Valladeau J."/>
            <person name="Durand I."/>
            <person name="Pin J.-J."/>
            <person name="Zurawski S.M."/>
            <person name="Patel S."/>
            <person name="Abrams J.S."/>
            <person name="Lebecque S."/>
            <person name="Garrone P."/>
            <person name="Saeland S."/>
        </authorList>
    </citation>
    <scope>NUCLEOTIDE SEQUENCE [MRNA] (ISOFORM 1)</scope>
    <scope>FUNCTION</scope>
    <scope>TISSUE SPECIFICITY</scope>
    <scope>INDUCTION</scope>
</reference>
<reference key="2">
    <citation type="journal article" date="2001" name="Biochem. Biophys. Res. Commun.">
        <title>Cloning and characterization of a novel ITIM containing lectin-like immunoreceptor LLIR and its two transmembrane region deletion variants.</title>
        <authorList>
            <person name="Huang X."/>
            <person name="Yuan Z."/>
            <person name="Chen G."/>
            <person name="Zhang M."/>
            <person name="Zhang W."/>
            <person name="Yu Y."/>
            <person name="Cao X."/>
        </authorList>
    </citation>
    <scope>NUCLEOTIDE SEQUENCE [MRNA] (ISOFORMS 1; 3 AND 4)</scope>
    <scope>INTERACTION WITH PTPN6</scope>
    <scope>TISSUE SPECIFICITY</scope>
    <scope>ALTERNATIVE SPLICING</scope>
    <scope>VARIANT LEU-36</scope>
</reference>
<reference key="3">
    <citation type="journal article" date="2002" name="J. Leukoc. Biol.">
        <title>The expression pattern of the ITIM-bearing lectin CLECSF6 in neutrophils suggests a key role in the control of inflammation.</title>
        <authorList>
            <person name="Richard M."/>
            <person name="Veilleux P."/>
            <person name="Rouleau M."/>
            <person name="Paquin R."/>
            <person name="Beaulieu A.D."/>
        </authorList>
    </citation>
    <scope>NUCLEOTIDE SEQUENCE [MRNA] (ISOFORMS 1 AND 2)</scope>
    <scope>TISSUE SPECIFICITY</scope>
    <scope>INDUCTION</scope>
    <scope>VARIANT LEU-36</scope>
</reference>
<reference key="4">
    <citation type="journal article" date="2006" name="Nature">
        <title>The finished DNA sequence of human chromosome 12.</title>
        <authorList>
            <person name="Scherer S.E."/>
            <person name="Muzny D.M."/>
            <person name="Buhay C.J."/>
            <person name="Chen R."/>
            <person name="Cree A."/>
            <person name="Ding Y."/>
            <person name="Dugan-Rocha S."/>
            <person name="Gill R."/>
            <person name="Gunaratne P."/>
            <person name="Harris R.A."/>
            <person name="Hawes A.C."/>
            <person name="Hernandez J."/>
            <person name="Hodgson A.V."/>
            <person name="Hume J."/>
            <person name="Jackson A."/>
            <person name="Khan Z.M."/>
            <person name="Kovar-Smith C."/>
            <person name="Lewis L.R."/>
            <person name="Lozado R.J."/>
            <person name="Metzker M.L."/>
            <person name="Milosavljevic A."/>
            <person name="Miner G.R."/>
            <person name="Montgomery K.T."/>
            <person name="Morgan M.B."/>
            <person name="Nazareth L.V."/>
            <person name="Scott G."/>
            <person name="Sodergren E."/>
            <person name="Song X.-Z."/>
            <person name="Steffen D."/>
            <person name="Lovering R.C."/>
            <person name="Wheeler D.A."/>
            <person name="Worley K.C."/>
            <person name="Yuan Y."/>
            <person name="Zhang Z."/>
            <person name="Adams C.Q."/>
            <person name="Ansari-Lari M.A."/>
            <person name="Ayele M."/>
            <person name="Brown M.J."/>
            <person name="Chen G."/>
            <person name="Chen Z."/>
            <person name="Clerc-Blankenburg K.P."/>
            <person name="Davis C."/>
            <person name="Delgado O."/>
            <person name="Dinh H.H."/>
            <person name="Draper H."/>
            <person name="Gonzalez-Garay M.L."/>
            <person name="Havlak P."/>
            <person name="Jackson L.R."/>
            <person name="Jacob L.S."/>
            <person name="Kelly S.H."/>
            <person name="Li L."/>
            <person name="Li Z."/>
            <person name="Liu J."/>
            <person name="Liu W."/>
            <person name="Lu J."/>
            <person name="Maheshwari M."/>
            <person name="Nguyen B.-V."/>
            <person name="Okwuonu G.O."/>
            <person name="Pasternak S."/>
            <person name="Perez L.M."/>
            <person name="Plopper F.J.H."/>
            <person name="Santibanez J."/>
            <person name="Shen H."/>
            <person name="Tabor P.E."/>
            <person name="Verduzco D."/>
            <person name="Waldron L."/>
            <person name="Wang Q."/>
            <person name="Williams G.A."/>
            <person name="Zhang J."/>
            <person name="Zhou J."/>
            <person name="Allen C.C."/>
            <person name="Amin A.G."/>
            <person name="Anyalebechi V."/>
            <person name="Bailey M."/>
            <person name="Barbaria J.A."/>
            <person name="Bimage K.E."/>
            <person name="Bryant N.P."/>
            <person name="Burch P.E."/>
            <person name="Burkett C.E."/>
            <person name="Burrell K.L."/>
            <person name="Calderon E."/>
            <person name="Cardenas V."/>
            <person name="Carter K."/>
            <person name="Casias K."/>
            <person name="Cavazos I."/>
            <person name="Cavazos S.R."/>
            <person name="Ceasar H."/>
            <person name="Chacko J."/>
            <person name="Chan S.N."/>
            <person name="Chavez D."/>
            <person name="Christopoulos C."/>
            <person name="Chu J."/>
            <person name="Cockrell R."/>
            <person name="Cox C.D."/>
            <person name="Dang M."/>
            <person name="Dathorne S.R."/>
            <person name="David R."/>
            <person name="Davis C.M."/>
            <person name="Davy-Carroll L."/>
            <person name="Deshazo D.R."/>
            <person name="Donlin J.E."/>
            <person name="D'Souza L."/>
            <person name="Eaves K.A."/>
            <person name="Egan A."/>
            <person name="Emery-Cohen A.J."/>
            <person name="Escotto M."/>
            <person name="Flagg N."/>
            <person name="Forbes L.D."/>
            <person name="Gabisi A.M."/>
            <person name="Garza M."/>
            <person name="Hamilton C."/>
            <person name="Henderson N."/>
            <person name="Hernandez O."/>
            <person name="Hines S."/>
            <person name="Hogues M.E."/>
            <person name="Huang M."/>
            <person name="Idlebird D.G."/>
            <person name="Johnson R."/>
            <person name="Jolivet A."/>
            <person name="Jones S."/>
            <person name="Kagan R."/>
            <person name="King L.M."/>
            <person name="Leal B."/>
            <person name="Lebow H."/>
            <person name="Lee S."/>
            <person name="LeVan J.M."/>
            <person name="Lewis L.C."/>
            <person name="London P."/>
            <person name="Lorensuhewa L.M."/>
            <person name="Loulseged H."/>
            <person name="Lovett D.A."/>
            <person name="Lucier A."/>
            <person name="Lucier R.L."/>
            <person name="Ma J."/>
            <person name="Madu R.C."/>
            <person name="Mapua P."/>
            <person name="Martindale A.D."/>
            <person name="Martinez E."/>
            <person name="Massey E."/>
            <person name="Mawhiney S."/>
            <person name="Meador M.G."/>
            <person name="Mendez S."/>
            <person name="Mercado C."/>
            <person name="Mercado I.C."/>
            <person name="Merritt C.E."/>
            <person name="Miner Z.L."/>
            <person name="Minja E."/>
            <person name="Mitchell T."/>
            <person name="Mohabbat F."/>
            <person name="Mohabbat K."/>
            <person name="Montgomery B."/>
            <person name="Moore N."/>
            <person name="Morris S."/>
            <person name="Munidasa M."/>
            <person name="Ngo R.N."/>
            <person name="Nguyen N.B."/>
            <person name="Nickerson E."/>
            <person name="Nwaokelemeh O.O."/>
            <person name="Nwokenkwo S."/>
            <person name="Obregon M."/>
            <person name="Oguh M."/>
            <person name="Oragunye N."/>
            <person name="Oviedo R.J."/>
            <person name="Parish B.J."/>
            <person name="Parker D.N."/>
            <person name="Parrish J."/>
            <person name="Parks K.L."/>
            <person name="Paul H.A."/>
            <person name="Payton B.A."/>
            <person name="Perez A."/>
            <person name="Perrin W."/>
            <person name="Pickens A."/>
            <person name="Primus E.L."/>
            <person name="Pu L.-L."/>
            <person name="Puazo M."/>
            <person name="Quiles M.M."/>
            <person name="Quiroz J.B."/>
            <person name="Rabata D."/>
            <person name="Reeves K."/>
            <person name="Ruiz S.J."/>
            <person name="Shao H."/>
            <person name="Sisson I."/>
            <person name="Sonaike T."/>
            <person name="Sorelle R.P."/>
            <person name="Sutton A.E."/>
            <person name="Svatek A.F."/>
            <person name="Svetz L.A."/>
            <person name="Tamerisa K.S."/>
            <person name="Taylor T.R."/>
            <person name="Teague B."/>
            <person name="Thomas N."/>
            <person name="Thorn R.D."/>
            <person name="Trejos Z.Y."/>
            <person name="Trevino B.K."/>
            <person name="Ukegbu O.N."/>
            <person name="Urban J.B."/>
            <person name="Vasquez L.I."/>
            <person name="Vera V.A."/>
            <person name="Villasana D.M."/>
            <person name="Wang L."/>
            <person name="Ward-Moore S."/>
            <person name="Warren J.T."/>
            <person name="Wei X."/>
            <person name="White F."/>
            <person name="Williamson A.L."/>
            <person name="Wleczyk R."/>
            <person name="Wooden H.S."/>
            <person name="Wooden S.H."/>
            <person name="Yen J."/>
            <person name="Yoon L."/>
            <person name="Yoon V."/>
            <person name="Zorrilla S.E."/>
            <person name="Nelson D."/>
            <person name="Kucherlapati R."/>
            <person name="Weinstock G."/>
            <person name="Gibbs R.A."/>
        </authorList>
    </citation>
    <scope>NUCLEOTIDE SEQUENCE [LARGE SCALE GENOMIC DNA]</scope>
</reference>
<reference key="5">
    <citation type="journal article" date="2004" name="Genome Res.">
        <title>The status, quality, and expansion of the NIH full-length cDNA project: the Mammalian Gene Collection (MGC).</title>
        <authorList>
            <consortium name="The MGC Project Team"/>
        </authorList>
    </citation>
    <scope>NUCLEOTIDE SEQUENCE [LARGE SCALE MRNA] (ISOFORM 1)</scope>
    <scope>VARIANT LEU-36</scope>
    <source>
        <tissue>Lung</tissue>
    </source>
</reference>
<reference key="6">
    <citation type="journal article" date="2008" name="Blood">
        <title>Targeting DCIR on human plasmacytoid dendritic cells results in antigen presentation and inhibits IFN-alpha production.</title>
        <authorList>
            <person name="Meyer-Wentrup F."/>
            <person name="Benitez-Ribas D."/>
            <person name="Tacken P.J."/>
            <person name="Punt C.J."/>
            <person name="Figdor C.G."/>
            <person name="de Vries I.J."/>
            <person name="Adema G.J."/>
        </authorList>
    </citation>
    <scope>FUNCTION</scope>
    <scope>TISSUE SPECIFICITY</scope>
    <scope>INDUCTION BY TRL9</scope>
    <scope>SUBCELLULAR LOCATION</scope>
</reference>
<reference key="7">
    <citation type="journal article" date="2010" name="Blood">
        <title>Cross-priming CD8+ T cells by targeting antigens to human dendritic cells through DCIR.</title>
        <authorList>
            <person name="Klechevsky E."/>
            <person name="Flamar A.L."/>
            <person name="Cao Y."/>
            <person name="Blanck J.P."/>
            <person name="Liu M."/>
            <person name="O'Bar A."/>
            <person name="Agouna-Deciat O."/>
            <person name="Klucar P."/>
            <person name="Thompson-Snipes L."/>
            <person name="Zurawski S."/>
            <person name="Reiter Y."/>
            <person name="Palucka A.K."/>
            <person name="Zurawski G."/>
            <person name="Banchereau J."/>
        </authorList>
    </citation>
    <scope>FUNCTION</scope>
    <scope>TISSUE SPECIFICITY</scope>
</reference>
<reference key="8">
    <citation type="journal article" date="2011" name="Blood">
        <title>DCIR-mediated enhancement of HIV-1 infection requires the ITIM-associated signal transduction pathway.</title>
        <authorList>
            <person name="Lambert A.A."/>
            <person name="Barabe F."/>
            <person name="Gilbert C."/>
            <person name="Tremblay M.J."/>
        </authorList>
    </citation>
    <scope>FUNCTION (MICROBIAL INFECTION)</scope>
    <scope>MUTAGENESIS OF THR-6 AND TYR-7</scope>
</reference>
<reference evidence="16 17" key="9">
    <citation type="journal article" date="2016" name="FEBS Lett.">
        <title>Crystal structure of human dendritic cell inhibitory receptor C-type lectin domain reveals the binding mode with N-glycan.</title>
        <authorList>
            <person name="Nagae M."/>
            <person name="Ikeda A."/>
            <person name="Hanashima S."/>
            <person name="Kojima T."/>
            <person name="Matsumoto N."/>
            <person name="Yamamoto K."/>
            <person name="Yamaguchi Y."/>
        </authorList>
    </citation>
    <scope>X-RAY CRYSTALLOGRAPHY (2.90 ANGSTROMS) OF 106-237 IN COMPLEX WITH CALCIUM; MANNOSE AND N-ACETYL-D-GLUCOSAMINE</scope>
    <scope>DISULFIDE BOND</scope>
</reference>
<name>CLC4A_HUMAN</name>
<evidence type="ECO:0000255" key="1"/>
<evidence type="ECO:0000255" key="2">
    <source>
        <dbReference type="PROSITE-ProRule" id="PRU00040"/>
    </source>
</evidence>
<evidence type="ECO:0000269" key="3">
    <source>
    </source>
</evidence>
<evidence type="ECO:0000269" key="4">
    <source>
    </source>
</evidence>
<evidence type="ECO:0000269" key="5">
    <source>
    </source>
</evidence>
<evidence type="ECO:0000269" key="6">
    <source>
    </source>
</evidence>
<evidence type="ECO:0000269" key="7">
    <source>
    </source>
</evidence>
<evidence type="ECO:0000269" key="8">
    <source>
    </source>
</evidence>
<evidence type="ECO:0000269" key="9">
    <source>
    </source>
</evidence>
<evidence type="ECO:0000269" key="10">
    <source>
    </source>
</evidence>
<evidence type="ECO:0000303" key="11">
    <source>
    </source>
</evidence>
<evidence type="ECO:0000303" key="12">
    <source>
    </source>
</evidence>
<evidence type="ECO:0000303" key="13">
    <source>
    </source>
</evidence>
<evidence type="ECO:0000305" key="14"/>
<evidence type="ECO:0000312" key="15">
    <source>
        <dbReference type="HGNC" id="HGNC:13257"/>
    </source>
</evidence>
<evidence type="ECO:0007744" key="16">
    <source>
        <dbReference type="PDB" id="5B1W"/>
    </source>
</evidence>
<evidence type="ECO:0007744" key="17">
    <source>
        <dbReference type="PDB" id="5B1X"/>
    </source>
</evidence>
<evidence type="ECO:0007829" key="18">
    <source>
        <dbReference type="PDB" id="5B1X"/>
    </source>
</evidence>
<feature type="chain" id="PRO_0000046612" description="C-type lectin domain family 4 member A">
    <location>
        <begin position="1"/>
        <end position="237"/>
    </location>
</feature>
<feature type="topological domain" description="Cytoplasmic" evidence="1">
    <location>
        <begin position="1"/>
        <end position="48"/>
    </location>
</feature>
<feature type="transmembrane region" description="Helical; Signal-anchor for type II membrane protein" evidence="1">
    <location>
        <begin position="49"/>
        <end position="69"/>
    </location>
</feature>
<feature type="topological domain" description="Extracellular" evidence="1">
    <location>
        <begin position="70"/>
        <end position="237"/>
    </location>
</feature>
<feature type="domain" description="C-type lectin" evidence="2">
    <location>
        <begin position="113"/>
        <end position="231"/>
    </location>
</feature>
<feature type="short sequence motif" description="ITIM motif" evidence="8">
    <location>
        <begin position="5"/>
        <end position="10"/>
    </location>
</feature>
<feature type="binding site" evidence="10 16 17">
    <location>
        <position position="143"/>
    </location>
    <ligand>
        <name>Ca(2+)</name>
        <dbReference type="ChEBI" id="CHEBI:29108"/>
        <label>1</label>
    </ligand>
</feature>
<feature type="binding site" evidence="10 16 17">
    <location>
        <position position="145"/>
    </location>
    <ligand>
        <name>Ca(2+)</name>
        <dbReference type="ChEBI" id="CHEBI:29108"/>
        <label>1</label>
    </ligand>
</feature>
<feature type="binding site" evidence="10 16 17">
    <location>
        <position position="149"/>
    </location>
    <ligand>
        <name>Ca(2+)</name>
        <dbReference type="ChEBI" id="CHEBI:29108"/>
        <label>1</label>
    </ligand>
</feature>
<feature type="binding site" evidence="10 17">
    <location>
        <begin position="195"/>
        <end position="197"/>
    </location>
    <ligand>
        <name>alpha-D-mannopyranose</name>
        <dbReference type="ChEBI" id="CHEBI:28729"/>
    </ligand>
</feature>
<feature type="binding site" evidence="10 16 17">
    <location>
        <position position="195"/>
    </location>
    <ligand>
        <name>Ca(2+)</name>
        <dbReference type="ChEBI" id="CHEBI:29108"/>
        <label>2</label>
    </ligand>
</feature>
<feature type="binding site" evidence="10 16 17">
    <location>
        <position position="197"/>
    </location>
    <ligand>
        <name>Ca(2+)</name>
        <dbReference type="ChEBI" id="CHEBI:29108"/>
        <label>2</label>
    </ligand>
</feature>
<feature type="binding site" evidence="10 17">
    <location>
        <position position="201"/>
    </location>
    <ligand>
        <name>alpha-D-mannopyranose</name>
        <dbReference type="ChEBI" id="CHEBI:28729"/>
    </ligand>
</feature>
<feature type="binding site" evidence="10 16 17">
    <location>
        <position position="201"/>
    </location>
    <ligand>
        <name>Ca(2+)</name>
        <dbReference type="ChEBI" id="CHEBI:29108"/>
        <label>2</label>
    </ligand>
</feature>
<feature type="binding site" evidence="10 17">
    <location>
        <begin position="207"/>
        <end position="209"/>
    </location>
    <ligand>
        <name>N-acetyl-D-glucosamine</name>
        <dbReference type="ChEBI" id="CHEBI:506227"/>
    </ligand>
</feature>
<feature type="binding site" evidence="10 16 17">
    <location>
        <position position="218"/>
    </location>
    <ligand>
        <name>Ca(2+)</name>
        <dbReference type="ChEBI" id="CHEBI:29108"/>
        <label>2</label>
    </ligand>
</feature>
<feature type="binding site" evidence="10 16 17">
    <location>
        <position position="219"/>
    </location>
    <ligand>
        <name>Ca(2+)</name>
        <dbReference type="ChEBI" id="CHEBI:29108"/>
        <label>2</label>
    </ligand>
</feature>
<feature type="binding site" evidence="10 16 17">
    <location>
        <position position="231"/>
    </location>
    <ligand>
        <name>Ca(2+)</name>
        <dbReference type="ChEBI" id="CHEBI:29108"/>
        <label>1</label>
    </ligand>
</feature>
<feature type="glycosylation site" description="N-linked (GlcNAc...) asparagine" evidence="1">
    <location>
        <position position="185"/>
    </location>
</feature>
<feature type="disulfide bond" evidence="2 10 16 17">
    <location>
        <begin position="106"/>
        <end position="117"/>
    </location>
</feature>
<feature type="disulfide bond" evidence="2 10 16 17">
    <location>
        <begin position="134"/>
        <end position="230"/>
    </location>
</feature>
<feature type="disulfide bond" evidence="2 10 16 17">
    <location>
        <begin position="203"/>
        <end position="222"/>
    </location>
</feature>
<feature type="splice variant" id="VSP_012842" description="In isoform 4." evidence="11">
    <location>
        <begin position="28"/>
        <end position="99"/>
    </location>
</feature>
<feature type="splice variant" id="VSP_041348" description="In isoform 3." evidence="11">
    <original>ASKERTAPHKSNTGFPKLLCASLLIFFLLLAISFFIAFVI</original>
    <variation>V</variation>
    <location>
        <begin position="28"/>
        <end position="67"/>
    </location>
</feature>
<feature type="splice variant" id="VSP_012844" description="In isoform 2." evidence="12">
    <original>IFFQKYSQLLEKKTTKELVHTTLECVKKNMPVEE</original>
    <variation>K</variation>
    <location>
        <begin position="67"/>
        <end position="100"/>
    </location>
</feature>
<feature type="sequence variant" id="VAR_021260" description="In dbSNP:rs2024301." evidence="4 5 6">
    <original>H</original>
    <variation>L</variation>
    <location>
        <position position="36"/>
    </location>
</feature>
<feature type="mutagenesis site" description="Decreases HIV-1 binding/entry in cells as well as virus replication." evidence="9">
    <original>T</original>
    <variation>F</variation>
    <location>
        <position position="6"/>
    </location>
</feature>
<feature type="mutagenesis site" description="Decreases HIV-1 binding/entry in cells as well as virus replication." evidence="9">
    <original>Y</original>
    <variation>F</variation>
    <location>
        <position position="7"/>
    </location>
</feature>
<feature type="sequence conflict" description="In Ref. 4; AAF75560." evidence="14" ref="4">
    <original>S</original>
    <variation>C</variation>
    <location>
        <position position="130"/>
    </location>
</feature>
<feature type="strand" evidence="18">
    <location>
        <begin position="111"/>
        <end position="113"/>
    </location>
</feature>
<feature type="strand" evidence="18">
    <location>
        <begin position="116"/>
        <end position="120"/>
    </location>
</feature>
<feature type="helix" evidence="18">
    <location>
        <begin position="127"/>
        <end position="136"/>
    </location>
</feature>
<feature type="helix" evidence="18">
    <location>
        <begin position="147"/>
        <end position="154"/>
    </location>
</feature>
<feature type="strand" evidence="18">
    <location>
        <begin position="163"/>
        <end position="168"/>
    </location>
</feature>
<feature type="strand" evidence="18">
    <location>
        <begin position="172"/>
        <end position="174"/>
    </location>
</feature>
<feature type="helix" evidence="18">
    <location>
        <begin position="186"/>
        <end position="188"/>
    </location>
</feature>
<feature type="strand" evidence="18">
    <location>
        <begin position="203"/>
        <end position="209"/>
    </location>
</feature>
<feature type="turn" evidence="18">
    <location>
        <begin position="210"/>
        <end position="213"/>
    </location>
</feature>
<feature type="strand" evidence="18">
    <location>
        <begin position="214"/>
        <end position="220"/>
    </location>
</feature>
<feature type="strand" evidence="18">
    <location>
        <begin position="222"/>
        <end position="224"/>
    </location>
</feature>
<feature type="strand" evidence="18">
    <location>
        <begin position="226"/>
        <end position="233"/>
    </location>
</feature>
<keyword id="KW-0002">3D-structure</keyword>
<keyword id="KW-1064">Adaptive immunity</keyword>
<keyword id="KW-0025">Alternative splicing</keyword>
<keyword id="KW-0106">Calcium</keyword>
<keyword id="KW-1003">Cell membrane</keyword>
<keyword id="KW-1015">Disulfide bond</keyword>
<keyword id="KW-0325">Glycoprotein</keyword>
<keyword id="KW-0945">Host-virus interaction</keyword>
<keyword id="KW-0391">Immunity</keyword>
<keyword id="KW-0399">Innate immunity</keyword>
<keyword id="KW-0430">Lectin</keyword>
<keyword id="KW-0472">Membrane</keyword>
<keyword id="KW-0479">Metal-binding</keyword>
<keyword id="KW-1267">Proteomics identification</keyword>
<keyword id="KW-1185">Reference proteome</keyword>
<keyword id="KW-0735">Signal-anchor</keyword>
<keyword id="KW-0812">Transmembrane</keyword>
<keyword id="KW-1133">Transmembrane helix</keyword>
<organism>
    <name type="scientific">Homo sapiens</name>
    <name type="common">Human</name>
    <dbReference type="NCBI Taxonomy" id="9606"/>
    <lineage>
        <taxon>Eukaryota</taxon>
        <taxon>Metazoa</taxon>
        <taxon>Chordata</taxon>
        <taxon>Craniata</taxon>
        <taxon>Vertebrata</taxon>
        <taxon>Euteleostomi</taxon>
        <taxon>Mammalia</taxon>
        <taxon>Eutheria</taxon>
        <taxon>Euarchontoglires</taxon>
        <taxon>Primates</taxon>
        <taxon>Haplorrhini</taxon>
        <taxon>Catarrhini</taxon>
        <taxon>Hominidae</taxon>
        <taxon>Homo</taxon>
    </lineage>
</organism>
<comment type="function">
    <text evidence="3 7 8 10">C-type lectin receptor that binds carbohydrates mannose and fucose but also weakly interacts with N-acetylglucosamine (GlcNAc) in a Ca(2+)-dependent manner (PubMed:27015765). Involved in regulating immune reactivity (PubMed:10438934, PubMed:18258799). Once triggered by antigen, it is internalized by clathrin-dependent endocytosis and delivers its antigenic cargo into the antigen presentation pathway resulting in cross-priming of CD8(+) T cells. This cross-presentation and cross-priming are enhanced by TLR7 and TLR8 agonists with increased expansion of the CD8(+) T cells, high production of IFNG and TNF with reduced levels of IL4, IL5 and IL13 (PubMed:18258799, PubMed:20530286). In plasmacytoid dendritic cells, inhibits TLR9-mediated IFNA and TNF production (PubMed:18258799). May be involved via its ITIM motif (immunoreceptor tyrosine-based inhibitory motifs) in the inhibition of B-cell-receptor-mediated calcium mobilization and protein tyrosine phosphorylation (PubMed:10438934).</text>
</comment>
<comment type="function">
    <text evidence="9">(Microbial infection) Involved in the interaction between HIV-1 virus and dendritic cells. Enhances HIV-1 binding/entry and virus infection. Requires ITIM motif-associated signal transduction pathway involving phosphatases PTPN6 and PTPN11, SYK, Src kinases and MAP kinases.</text>
</comment>
<comment type="subunit">
    <text>May interact with PTPN6 via its ITIM motif.</text>
</comment>
<comment type="subcellular location">
    <subcellularLocation>
        <location evidence="7">Cell membrane</location>
        <topology evidence="14">Single-pass type II membrane protein</topology>
        <orientation evidence="7">Extracellular side</orientation>
    </subcellularLocation>
</comment>
<comment type="alternative products">
    <event type="alternative splicing"/>
    <isoform>
        <id>Q9UMR7-1</id>
        <name>1</name>
        <sequence type="displayed"/>
    </isoform>
    <isoform>
        <id>Q9UMR7-2</id>
        <name>2</name>
        <sequence type="described" ref="VSP_012844"/>
    </isoform>
    <isoform>
        <id>Q9UMR7-3</id>
        <name>3</name>
        <name>llirV1</name>
        <sequence type="described" ref="VSP_041348"/>
    </isoform>
    <isoform>
        <id>Q9UMR7-4</id>
        <name>4</name>
        <name>llirV2</name>
        <sequence type="described" ref="VSP_012842"/>
    </isoform>
</comment>
<comment type="tissue specificity">
    <text evidence="3 4 5 7 8">Expressed preferentially in hematopoietic tissues. Expressed in all circulating Ag-presenting cells such as dendritic cells, myeloid cells, monocytes, macrophages, B-cells and epidermal Langerhans cells (at protein level). Expressed in peripheral blood leukocytes, neutrophils, moderate quantities in spleen, lymph node, and bone marrow, and at very low levels in thymus.</text>
</comment>
<comment type="induction">
    <text evidence="3 5 7">TNF alpha, IL-1 alpha, and LPS, down-regulated expression at the surface of neutrophils (at protein level) (PubMed:11994513). Expression is decreased in dendritic cells by signals inducing their maturation (e.g. CD40 ligand, TLR9 ligands, LPS, and TNF alpha) (PubMed:10438934, PubMed:18258799). Isoform 2: mRNA expression is up-regulated by agonists of neutrophils CSF2/GM-CSF, IL3/interleukin-3, IL4/interleukin-4 and IL13/interleukin-13 (PubMed:11994513).</text>
</comment>
<comment type="domain">
    <text evidence="8">Contains 1 copy of a cytoplasmic motif that is referred to as the immunoreceptor tyrosine-based inhibitor motif (ITIM). This motif is involved in modulation of cellular responses. The phosphorylated ITIM motif can bind the SH2 domain of several SH2-containing phosphatases (PubMed:20530286). Involved in the interaction between HIV-1 virus and dendritic cells. Enhances HIV-1 binding/entry and virus infection. Requires ITIM motif-associated signal transduction pathway involving phosphatases PTPN6 and PTPN11, SYK, Src kinases and MAP kinases (PubMed:20530286). ITIM motif-associated signal transduction pathway involving phosphatases PTPN6 and PTPN11, SYK, Src kinases and MAP kinases is required for HIV-1 binding/entry and virus infection (PubMed:20530286).</text>
</comment>
<comment type="sequence caution" evidence="14">
    <conflict type="frameshift">
        <sequence resource="EMBL-CDS" id="AAL56016"/>
    </conflict>
</comment>
<comment type="online information" name="Functional Glycomics Gateway - Glycan Binding">
    <link uri="http://www.functionalglycomics.org/glycomics/GBPServlet?&amp;operationType=view&amp;cbpId=cbp_hum_Ctlect_00137"/>
    <text>DCIR</text>
</comment>
<accession>Q9UMR7</accession>
<accession>Q17R69</accession>
<accession>Q8WXW9</accession>
<accession>Q9H2Z9</accession>
<accession>Q9NS33</accession>
<accession>Q9UI34</accession>
<gene>
    <name evidence="15" type="primary">CLEC4A</name>
    <name evidence="13" type="synonym">CLECSF6</name>
    <name evidence="13" type="synonym">DCIR</name>
    <name type="synonym">LLIR</name>
    <name type="ORF">HDCGC13P</name>
</gene>